<reference key="1">
    <citation type="journal article" date="1989" name="Arch. Virol.">
        <title>Comparative sequence analysis of VP7 genes from five Australian porcine rotaviruses.</title>
        <authorList>
            <person name="Huang J.A."/>
            <person name="Nagesha H.S."/>
            <person name="Dyall-Smith M.L."/>
            <person name="Holmes I.H."/>
        </authorList>
    </citation>
    <scope>NUCLEOTIDE SEQUENCE</scope>
</reference>
<sequence>MYGIEYTTVLFYLISFVFVSYILKTITKIMDYIIYRITFIIVVLSILSNAQNYGINLPITGSMDTTYANSTQNDNFLSSTLCLYYPTEARTQINDNEWKDTLSQLFLTKGWPTGSVYFNEYSNVLEFSIDPKLYCDYNVVLIKFVSGEELDISELADLILNEWLCNPMDITLYYYQQTGEANKWISMGSSCTVKVCPLNTQTLGIGCQTTNVNTFETVADSEKLAIVDVVDSVNHKLDVTSTTCMIRNCNKLGPRENVAIIQVGGSNILDITADPTTSPQTERMMRVNWKKWWQVFYTVVDYINQIVQVMSKRSRSLDSSSFYYRV</sequence>
<protein>
    <recommendedName>
        <fullName evidence="2">Outer capsid glycoprotein VP7</fullName>
    </recommendedName>
</protein>
<feature type="signal peptide" evidence="2">
    <location>
        <begin position="1"/>
        <end position="50"/>
    </location>
</feature>
<feature type="chain" id="PRO_0000149616" description="Outer capsid glycoprotein VP7" evidence="2">
    <location>
        <begin position="51"/>
        <end position="326"/>
    </location>
</feature>
<feature type="region of interest" description="CNP motif; interaction with ITGAV/ITGB3" evidence="2">
    <location>
        <begin position="165"/>
        <end position="167"/>
    </location>
</feature>
<feature type="region of interest" description="LVD motif; interaction with ITGA4/ITGB1 heterodimer" evidence="2">
    <location>
        <begin position="237"/>
        <end position="239"/>
    </location>
</feature>
<feature type="region of interest" description="GPR motif; interaction with ITGAX/ITGB2" evidence="2">
    <location>
        <begin position="253"/>
        <end position="255"/>
    </location>
</feature>
<feature type="binding site" evidence="2">
    <location>
        <position position="95"/>
    </location>
    <ligand>
        <name>Ca(2+)</name>
        <dbReference type="ChEBI" id="CHEBI:29108"/>
        <label>1</label>
    </ligand>
</feature>
<feature type="binding site" evidence="2">
    <location>
        <position position="177"/>
    </location>
    <ligand>
        <name>Ca(2+)</name>
        <dbReference type="ChEBI" id="CHEBI:29108"/>
        <label>2</label>
    </ligand>
</feature>
<feature type="binding site" evidence="2">
    <location>
        <position position="206"/>
    </location>
    <ligand>
        <name>Ca(2+)</name>
        <dbReference type="ChEBI" id="CHEBI:29108"/>
        <label>1</label>
    </ligand>
</feature>
<feature type="binding site" evidence="2">
    <location>
        <position position="214"/>
    </location>
    <ligand>
        <name>Ca(2+)</name>
        <dbReference type="ChEBI" id="CHEBI:29108"/>
        <label>1</label>
    </ligand>
</feature>
<feature type="binding site" evidence="2">
    <location>
        <position position="216"/>
    </location>
    <ligand>
        <name>Ca(2+)</name>
        <dbReference type="ChEBI" id="CHEBI:29108"/>
        <label>1</label>
    </ligand>
</feature>
<feature type="binding site" evidence="2">
    <location>
        <position position="228"/>
    </location>
    <ligand>
        <name>Ca(2+)</name>
        <dbReference type="ChEBI" id="CHEBI:29108"/>
        <label>2</label>
    </ligand>
</feature>
<feature type="binding site" evidence="2">
    <location>
        <position position="229"/>
    </location>
    <ligand>
        <name>Ca(2+)</name>
        <dbReference type="ChEBI" id="CHEBI:29108"/>
        <label>2</label>
    </ligand>
</feature>
<feature type="binding site" evidence="2">
    <location>
        <position position="231"/>
    </location>
    <ligand>
        <name>Ca(2+)</name>
        <dbReference type="ChEBI" id="CHEBI:29108"/>
        <label>2</label>
    </ligand>
</feature>
<feature type="binding site" evidence="2">
    <location>
        <position position="301"/>
    </location>
    <ligand>
        <name>Ca(2+)</name>
        <dbReference type="ChEBI" id="CHEBI:29108"/>
        <label>2</label>
    </ligand>
</feature>
<feature type="glycosylation site" description="N-linked (GlcNAc...) asparagine; by host" evidence="1">
    <location>
        <position position="69"/>
    </location>
</feature>
<feature type="disulfide bond" evidence="2">
    <location>
        <begin position="82"/>
        <end position="135"/>
    </location>
</feature>
<feature type="disulfide bond" evidence="2">
    <location>
        <begin position="165"/>
        <end position="249"/>
    </location>
</feature>
<feature type="disulfide bond" evidence="2">
    <location>
        <begin position="191"/>
        <end position="244"/>
    </location>
</feature>
<feature type="disulfide bond" evidence="2">
    <location>
        <begin position="196"/>
        <end position="207"/>
    </location>
</feature>
<feature type="splice variant" id="VSP_038605" description="In isoform 2." evidence="3">
    <location>
        <begin position="1"/>
        <end position="29"/>
    </location>
</feature>
<keyword id="KW-0024">Alternative initiation</keyword>
<keyword id="KW-0106">Calcium</keyword>
<keyword id="KW-0167">Capsid protein</keyword>
<keyword id="KW-1015">Disulfide bond</keyword>
<keyword id="KW-0325">Glycoprotein</keyword>
<keyword id="KW-1038">Host endoplasmic reticulum</keyword>
<keyword id="KW-0945">Host-virus interaction</keyword>
<keyword id="KW-0479">Metal-binding</keyword>
<keyword id="KW-1152">Outer capsid protein</keyword>
<keyword id="KW-0732">Signal</keyword>
<keyword id="KW-1146">T=13 icosahedral capsid protein</keyword>
<keyword id="KW-0946">Virion</keyword>
<proteinExistence type="inferred from homology"/>
<evidence type="ECO:0000255" key="1"/>
<evidence type="ECO:0000255" key="2">
    <source>
        <dbReference type="HAMAP-Rule" id="MF_04131"/>
    </source>
</evidence>
<evidence type="ECO:0000305" key="3"/>
<dbReference type="SMR" id="P32548"/>
<dbReference type="GO" id="GO:0044166">
    <property type="term" value="C:host cell endoplasmic reticulum lumen"/>
    <property type="evidence" value="ECO:0007669"/>
    <property type="project" value="UniProtKB-SubCell"/>
</dbReference>
<dbReference type="GO" id="GO:0039621">
    <property type="term" value="C:T=13 icosahedral viral capsid"/>
    <property type="evidence" value="ECO:0007669"/>
    <property type="project" value="UniProtKB-UniRule"/>
</dbReference>
<dbReference type="GO" id="GO:0039624">
    <property type="term" value="C:viral outer capsid"/>
    <property type="evidence" value="ECO:0007669"/>
    <property type="project" value="UniProtKB-UniRule"/>
</dbReference>
<dbReference type="GO" id="GO:0046872">
    <property type="term" value="F:metal ion binding"/>
    <property type="evidence" value="ECO:0007669"/>
    <property type="project" value="UniProtKB-KW"/>
</dbReference>
<dbReference type="Gene3D" id="3.40.50.11130">
    <property type="entry name" value="Glycoprotein VP7, domain 1"/>
    <property type="match status" value="1"/>
</dbReference>
<dbReference type="Gene3D" id="2.60.120.800">
    <property type="entry name" value="Rotavirus outer-layer protein VP7, domain 2"/>
    <property type="match status" value="1"/>
</dbReference>
<dbReference type="HAMAP" id="MF_04130">
    <property type="entry name" value="Rota_VP7"/>
    <property type="match status" value="1"/>
</dbReference>
<dbReference type="HAMAP" id="MF_04131">
    <property type="entry name" value="Rota_VP7_A"/>
    <property type="match status" value="1"/>
</dbReference>
<dbReference type="InterPro" id="IPR001963">
    <property type="entry name" value="VP7"/>
</dbReference>
<dbReference type="InterPro" id="IPR042207">
    <property type="entry name" value="VP7_1"/>
</dbReference>
<dbReference type="InterPro" id="IPR042210">
    <property type="entry name" value="VP7_2"/>
</dbReference>
<dbReference type="Pfam" id="PF00434">
    <property type="entry name" value="VP7"/>
    <property type="match status" value="1"/>
</dbReference>
<name>VP7_ROTPB</name>
<organism>
    <name type="scientific">Rotavirus A (isolate RVA/Pig/Australia/BEN144/1989/G4P2B[6])</name>
    <name type="common">RV-A</name>
    <dbReference type="NCBI Taxonomy" id="31579"/>
    <lineage>
        <taxon>Viruses</taxon>
        <taxon>Riboviria</taxon>
        <taxon>Orthornavirae</taxon>
        <taxon>Duplornaviricota</taxon>
        <taxon>Resentoviricetes</taxon>
        <taxon>Reovirales</taxon>
        <taxon>Sedoreoviridae</taxon>
        <taxon>Rotavirus</taxon>
        <taxon>Rotavirus A</taxon>
    </lineage>
</organism>
<organismHost>
    <name type="scientific">Sus scrofa</name>
    <name type="common">Pig</name>
    <dbReference type="NCBI Taxonomy" id="9823"/>
</organismHost>
<comment type="function">
    <text evidence="2">Calcium-binding protein that interacts with rotavirus cell receptors once the initial attachment by VP4 has been achieved. Rotavirus attachment and entry into the host cell probably involves multiple sequential contacts between the outer capsid proteins VP4 and VP7, and the cell receptors. Following entry into the host cell, low intracellular or intravesicular Ca(2+) concentration probably causes the calcium-stabilized VP7 trimers to dissociate from the virion. This step is probably necessary for the membrane-disrupting entry step and the release of VP4, which is locked onto the virion by VP7.</text>
</comment>
<comment type="subunit">
    <text evidence="2">Homotrimer; disulfide-linked. 2 Ca(2+) ions bound at each subunit interface in the trimer hold the trimer together. Interacts with the intermediate capsid protein VP6. Interacts with the outer capsid protein VP5*.</text>
</comment>
<comment type="subcellular location">
    <subcellularLocation>
        <location evidence="2">Virion</location>
    </subcellularLocation>
    <subcellularLocation>
        <location evidence="2">Host endoplasmic reticulum lumen</location>
    </subcellularLocation>
    <text evidence="2">The outer layer contains 780 copies of VP7, grouped as 260 trimers. Immature double-layered particles assembled in the cytoplasm bud across the membrane of the endoplasmic reticulum, acquiring during this process a transient lipid membrane that is modified with the ER resident viral glycoproteins NSP4 and VP7; these enveloped particles also contain VP4. As the particles move towards the interior of the ER cisternae, the transient lipid membrane and the non-structural protein NSP4 are lost, while the virus surface proteins VP4 and VP7 rearrange to form the outermost virus protein layer, yielding mature infectious triple-layered particles.</text>
</comment>
<comment type="alternative products">
    <event type="alternative initiation"/>
    <isoform>
        <id>P32548-1</id>
        <name>1</name>
        <sequence type="displayed"/>
    </isoform>
    <isoform>
        <id>P32548-2</id>
        <name>2</name>
        <sequence type="described" ref="VSP_038605"/>
    </isoform>
</comment>
<comment type="PTM">
    <text evidence="2">N-glycosylated.</text>
</comment>
<comment type="PTM">
    <text evidence="2">The N-terminus is blocked possibly by pyroglutamic acid.</text>
</comment>
<comment type="miscellaneous">
    <text evidence="2">Some rotavirus strains are neuraminidase-sensitive and require sialic acid to attach to the cell surface. Some rotavirus strains are integrin-dependent. Some rotavirus strains depend on ganglioside for their entry into the host cell. Hsp70 also seems to be involved in the entry of some strains.</text>
</comment>
<comment type="miscellaneous">
    <text evidence="2">In group A rotaviruses, VP7 defines the G serotype.</text>
</comment>
<comment type="miscellaneous">
    <molecule>Isoform 2</molecule>
    <text evidence="3">Produced by alternative initiation at Met-30 of isoform 1.</text>
</comment>
<comment type="similarity">
    <text evidence="2">Belongs to the rotavirus VP7 family.</text>
</comment>
<accession>P32548</accession>